<accession>Q4ZFU2</accession>
<keyword id="KW-0204">Cytolysis</keyword>
<keyword id="KW-1061">Dermonecrotic toxin</keyword>
<keyword id="KW-1015">Disulfide bond</keyword>
<keyword id="KW-0325">Glycoprotein</keyword>
<keyword id="KW-0354">Hemolysis</keyword>
<keyword id="KW-0442">Lipid degradation</keyword>
<keyword id="KW-0443">Lipid metabolism</keyword>
<keyword id="KW-0456">Lyase</keyword>
<keyword id="KW-0460">Magnesium</keyword>
<keyword id="KW-0479">Metal-binding</keyword>
<keyword id="KW-0964">Secreted</keyword>
<keyword id="KW-0732">Signal</keyword>
<keyword id="KW-0800">Toxin</keyword>
<keyword id="KW-0865">Zymogen</keyword>
<comment type="function">
    <text evidence="2 5 6 7">Dermonecrotic toxins cleave the phosphodiester linkage between the phosphate and headgroup of certain phospholipids (sphingolipid and lysolipid substrates), forming an alcohol (often choline) and a cyclic phosphate (PubMed:24009677, PubMed:25752604). This toxin acts on sphingomyelin (SM) with high activity and on lysophosphatidylcholine (LPC) and ceramide phosphoethanolamine (CPE) with low activity (PubMed:24009677, PubMed:25752604). In vivo, shows potent insecticidal activities (PubMed:22561243). On mammals, induces dermonecrosis, hemolysis, increased vascular permeability, edema, inflammatory response, and platelet aggregation (By similarity).</text>
</comment>
<comment type="catalytic activity">
    <reaction evidence="6 7">
        <text>an N-(acyl)-sphingosylphosphocholine = an N-(acyl)-sphingosyl-1,3-cyclic phosphate + choline</text>
        <dbReference type="Rhea" id="RHEA:60652"/>
        <dbReference type="ChEBI" id="CHEBI:15354"/>
        <dbReference type="ChEBI" id="CHEBI:64583"/>
        <dbReference type="ChEBI" id="CHEBI:143892"/>
    </reaction>
</comment>
<comment type="catalytic activity">
    <reaction evidence="6 7">
        <text>N-hexanoyl-sphing-4-enine-1-phosphocholine = N-(hexanoyl)-sphing-4-enine-1,3-cyclic phosphate + choline</text>
        <dbReference type="Rhea" id="RHEA:60620"/>
        <dbReference type="ChEBI" id="CHEBI:15354"/>
        <dbReference type="ChEBI" id="CHEBI:78254"/>
        <dbReference type="ChEBI" id="CHEBI:143883"/>
    </reaction>
</comment>
<comment type="catalytic activity">
    <reaction evidence="7">
        <text>N-(dodecanoyl)-sphing-4-enine-1-phosphocholine = N-dodecanoyl-sphing-4-enine-1,3-cyclic phosphate + choline</text>
        <dbReference type="Rhea" id="RHEA:60636"/>
        <dbReference type="ChEBI" id="CHEBI:15354"/>
        <dbReference type="ChEBI" id="CHEBI:137334"/>
        <dbReference type="ChEBI" id="CHEBI:143884"/>
    </reaction>
</comment>
<comment type="catalytic activity">
    <reaction evidence="6 7">
        <text>a 1-acyl-sn-glycero-3-phosphocholine = a 1-acyl-sn-glycero-2,3-cyclic phosphate + choline</text>
        <dbReference type="Rhea" id="RHEA:60700"/>
        <dbReference type="ChEBI" id="CHEBI:15354"/>
        <dbReference type="ChEBI" id="CHEBI:58168"/>
        <dbReference type="ChEBI" id="CHEBI:143947"/>
    </reaction>
</comment>
<comment type="catalytic activity">
    <reaction evidence="7">
        <text>1-tetradecanoyl-sn-glycero-3-phosphocholine = 1-tetradecanoyl-sn-glycero-2,3-cyclic phosphate + choline</text>
        <dbReference type="Rhea" id="RHEA:60604"/>
        <dbReference type="ChEBI" id="CHEBI:15354"/>
        <dbReference type="ChEBI" id="CHEBI:64489"/>
        <dbReference type="ChEBI" id="CHEBI:143882"/>
    </reaction>
</comment>
<comment type="catalytic activity">
    <reaction evidence="6 7">
        <text>1-octanoyl-sn-glycero-3-phosphocholine = 1-octanoyl-sn-glycero-2,3-cyclic phosphate + choline</text>
        <dbReference type="Rhea" id="RHEA:60612"/>
        <dbReference type="ChEBI" id="CHEBI:15354"/>
        <dbReference type="ChEBI" id="CHEBI:143866"/>
        <dbReference type="ChEBI" id="CHEBI:143876"/>
    </reaction>
</comment>
<comment type="catalytic activity">
    <reaction evidence="6">
        <text>1-hexadecanoyl-sn-glycero-3-phosphocholine = 1-hexadecanoyl-sn-glycero-2,3-cyclic phosphate + choline</text>
        <dbReference type="Rhea" id="RHEA:60656"/>
        <dbReference type="ChEBI" id="CHEBI:15354"/>
        <dbReference type="ChEBI" id="CHEBI:72998"/>
        <dbReference type="ChEBI" id="CHEBI:143893"/>
    </reaction>
</comment>
<comment type="catalytic activity">
    <reaction evidence="7">
        <text>an N-(acyl)-sphingosylphosphoethanolamine = an N-(acyl)-sphingosyl-1,3-cyclic phosphate + ethanolamine</text>
        <dbReference type="Rhea" id="RHEA:60648"/>
        <dbReference type="ChEBI" id="CHEBI:57603"/>
        <dbReference type="ChEBI" id="CHEBI:143891"/>
        <dbReference type="ChEBI" id="CHEBI:143892"/>
    </reaction>
</comment>
<comment type="catalytic activity">
    <reaction evidence="7">
        <text>N-dodecanoyl-heptadecasphing-4-enine-1-phosphoethanolamine = N-dodecanoyl-heptadecasphing-4-enine-1,3-cyclic phosphate + ethanolamine</text>
        <dbReference type="Rhea" id="RHEA:60616"/>
        <dbReference type="ChEBI" id="CHEBI:57603"/>
        <dbReference type="ChEBI" id="CHEBI:143864"/>
        <dbReference type="ChEBI" id="CHEBI:143865"/>
    </reaction>
</comment>
<comment type="cofactor">
    <cofactor evidence="3">
        <name>Mg(2+)</name>
        <dbReference type="ChEBI" id="CHEBI:18420"/>
    </cofactor>
    <text evidence="3">Binds 1 Mg(2+) ion per subunit.</text>
</comment>
<comment type="subcellular location">
    <subcellularLocation>
        <location evidence="5">Secreted</location>
    </subcellularLocation>
</comment>
<comment type="tissue specificity">
    <text evidence="10">Expressed by the venom gland.</text>
</comment>
<comment type="toxic dose">
    <text evidence="5">PD(50) is 2.27 +-0.43 ug/g when injected into cricket (Acheta domestica) (observed at 60 minutes).</text>
</comment>
<comment type="toxic dose">
    <text evidence="5">LD(50) is 2.27 +-0.43 ug/g when injected into cricket (Acheta domestica) (observed at 24 hours).</text>
</comment>
<comment type="similarity">
    <text evidence="9">Belongs to the arthropod phospholipase D family. Class II subfamily.</text>
</comment>
<comment type="caution">
    <text evidence="6 7">The most common activity assay for dermonecrotic toxins detects catalytic activity by monitoring choline release from substrate. Liberation of choline from sphingomyelin (SM) or lysophosphatidylcholine (LPC) is commonly assumed to result from substrate hydrolysis, giving either ceramide-1-phosphate (C1P) or lysophosphatidic acid (LPA), respectively, as a second product. However, two studies from Lajoie and colleagues (2013 and 2015) report the observation of exclusive formation of cyclic phosphate products as second products, resulting from intramolecular transphosphatidylation. Cyclic phosphates have vastly different biological properties from their monoester counterparts, and they may be relevant to the pathology of brown spider envenomation.</text>
</comment>
<proteinExistence type="evidence at protein level"/>
<name>A1LB1_LOXAR</name>
<evidence type="ECO:0000250" key="1"/>
<evidence type="ECO:0000250" key="2">
    <source>
        <dbReference type="UniProtKB" id="P0CE80"/>
    </source>
</evidence>
<evidence type="ECO:0000250" key="3">
    <source>
        <dbReference type="UniProtKB" id="Q8I914"/>
    </source>
</evidence>
<evidence type="ECO:0000255" key="4"/>
<evidence type="ECO:0000269" key="5">
    <source>
    </source>
</evidence>
<evidence type="ECO:0000269" key="6">
    <source>
    </source>
</evidence>
<evidence type="ECO:0000269" key="7">
    <source>
    </source>
</evidence>
<evidence type="ECO:0000303" key="8">
    <source>
    </source>
</evidence>
<evidence type="ECO:0000305" key="9"/>
<evidence type="ECO:0000305" key="10">
    <source>
    </source>
</evidence>
<sequence>VRATEKFAPIYFFCHPLQSAETDVAERANKRPIWIMGHMVNANYQIDEFVNLGANSIETDVSFDSSANPEYTYHGVPCDCRRWCKKWEYFNNFLKALRKATTPGDSKYHEKLVLVVFDLKTGSLYDNQAYDAGKKLAKNLLQHYWNNGNNGGRAYIVLSIPNLAHYKLITGFKETLKTEGHPELMEKVGYDFSGNDNIDQVANAYKKAGVTGHVWQSDGITNCVASFIRGLDRAKKAVKNRDSSNGYINKVYYWTVDKYATTREAFDIGVDGIMTNYPDVIANVLNESAYKGKFRLATYDDNPWETFKN</sequence>
<organism>
    <name type="scientific">Loxosceles arizonica</name>
    <name type="common">Arizona brown spider</name>
    <dbReference type="NCBI Taxonomy" id="196454"/>
    <lineage>
        <taxon>Eukaryota</taxon>
        <taxon>Metazoa</taxon>
        <taxon>Ecdysozoa</taxon>
        <taxon>Arthropoda</taxon>
        <taxon>Chelicerata</taxon>
        <taxon>Arachnida</taxon>
        <taxon>Araneae</taxon>
        <taxon>Araneomorphae</taxon>
        <taxon>Haplogynae</taxon>
        <taxon>Scytodoidea</taxon>
        <taxon>Sicariidae</taxon>
        <taxon>Loxosceles</taxon>
    </lineage>
</organism>
<feature type="signal peptide" evidence="4">
    <location>
        <begin position="1" status="less than"/>
        <end position="1"/>
    </location>
</feature>
<feature type="propeptide" id="PRO_0000279549" evidence="1">
    <location>
        <begin position="2"/>
        <end position="27"/>
    </location>
</feature>
<feature type="chain" id="PRO_0000279550" description="Dermonecrotic toxin LarSicTox-alphaIB2bi">
    <location>
        <begin position="28"/>
        <end position="309"/>
    </location>
</feature>
<feature type="active site" evidence="3">
    <location>
        <position position="38"/>
    </location>
</feature>
<feature type="active site" description="Nucleophile" evidence="3">
    <location>
        <position position="74"/>
    </location>
</feature>
<feature type="binding site" evidence="3">
    <location>
        <position position="58"/>
    </location>
    <ligand>
        <name>Mg(2+)</name>
        <dbReference type="ChEBI" id="CHEBI:18420"/>
    </ligand>
</feature>
<feature type="binding site" evidence="3">
    <location>
        <position position="60"/>
    </location>
    <ligand>
        <name>Mg(2+)</name>
        <dbReference type="ChEBI" id="CHEBI:18420"/>
    </ligand>
</feature>
<feature type="binding site" evidence="3">
    <location>
        <position position="118"/>
    </location>
    <ligand>
        <name>Mg(2+)</name>
        <dbReference type="ChEBI" id="CHEBI:18420"/>
    </ligand>
</feature>
<feature type="glycosylation site" description="N-linked (GlcNAc...) asparagine" evidence="4">
    <location>
        <position position="286"/>
    </location>
</feature>
<feature type="disulfide bond" evidence="2">
    <location>
        <begin position="78"/>
        <end position="84"/>
    </location>
</feature>
<feature type="disulfide bond" evidence="2">
    <location>
        <begin position="80"/>
        <end position="223"/>
    </location>
</feature>
<feature type="mutagenesis site" description="Does not release choline from LPC." evidence="6">
    <original>H</original>
    <variation>N</variation>
    <location>
        <position position="74"/>
    </location>
</feature>
<feature type="non-terminal residue">
    <location>
        <position position="1"/>
    </location>
</feature>
<protein>
    <recommendedName>
        <fullName evidence="8">Dermonecrotic toxin LarSicTox-alphaIB2bi</fullName>
        <ecNumber evidence="6 7">4.6.1.-</ecNumber>
    </recommendedName>
    <alternativeName>
        <fullName>Laz-SMase D</fullName>
    </alternativeName>
    <alternativeName>
        <fullName>Phospholipase D</fullName>
        <shortName>PLD</shortName>
    </alternativeName>
    <alternativeName>
        <fullName>Sphingomyelin phosphodiesterase D 2</fullName>
        <shortName>SMD 2</shortName>
        <shortName>SMase D 2</shortName>
        <shortName>Sphingomyelinase D 2</shortName>
    </alternativeName>
</protein>
<reference key="1">
    <citation type="journal article" date="2005" name="Toxicon">
        <title>Sphingomyelinase D from venoms of Loxosceles spiders: evolutionary insights from cDNA sequences and gene structure.</title>
        <authorList>
            <person name="Binford G.J."/>
            <person name="Cordes M.H.J."/>
            <person name="Wells M.A."/>
        </authorList>
    </citation>
    <scope>NUCLEOTIDE SEQUENCE [MRNA]</scope>
    <source>
        <tissue>Venom gland</tissue>
    </source>
</reference>
<reference key="2">
    <citation type="journal article" date="2012" name="Toxicon">
        <title>Sphingomyelinase D in sicariid spider venom is a potent insecticidal toxin.</title>
        <authorList>
            <person name="Zobel-Thropp P.A."/>
            <person name="Kerins A.E."/>
            <person name="Binford G.J."/>
        </authorList>
    </citation>
    <scope>TOXIC DOSE</scope>
    <scope>SUBCELLULAR LOCATION</scope>
</reference>
<reference key="3">
    <citation type="journal article" date="2013" name="PLoS ONE">
        <title>Phospholipase D toxins of brown spider venom convert lysophosphatidylcholine and sphingomyelin to cyclic phosphates.</title>
        <authorList>
            <person name="Lajoie D.M."/>
            <person name="Zobel-Thropp P.A."/>
            <person name="Kumirov V.K."/>
            <person name="Bandarian V."/>
            <person name="Binford G.J."/>
            <person name="Cordes M.H."/>
        </authorList>
    </citation>
    <scope>FUNCTION</scope>
    <scope>CATALYTIC ACTIVITY</scope>
    <scope>MUTAGENESIS OF HIS-74</scope>
</reference>
<reference key="4">
    <citation type="journal article" date="2015" name="J. Biol. Chem.">
        <title>Variable substrate preference among phospholipase D toxins from Sicariid spiders.</title>
        <authorList>
            <person name="Lajoie D.M."/>
            <person name="Roberts S.A."/>
            <person name="Zobel-Thropp P.A."/>
            <person name="Delahaye J.L."/>
            <person name="Bandarian V."/>
            <person name="Binford G.J."/>
            <person name="Cordes M.H."/>
        </authorList>
    </citation>
    <scope>CATALYTIC ACTIVITY</scope>
    <scope>FUNCTION</scope>
</reference>
<dbReference type="EC" id="4.6.1.-" evidence="6 7"/>
<dbReference type="EMBL" id="AY699703">
    <property type="protein sequence ID" value="AAW22997.1"/>
    <property type="molecule type" value="mRNA"/>
</dbReference>
<dbReference type="SMR" id="Q4ZFU2"/>
<dbReference type="SwissLipids" id="SLP:000001960"/>
<dbReference type="ArachnoServer" id="AS000135">
    <property type="toxin name" value="Sphingomyelinase D (LaSicTox-alphaIB2bi)"/>
</dbReference>
<dbReference type="BRENDA" id="3.1.4.41">
    <property type="organism ID" value="8289"/>
</dbReference>
<dbReference type="GO" id="GO:0005576">
    <property type="term" value="C:extracellular region"/>
    <property type="evidence" value="ECO:0007669"/>
    <property type="project" value="UniProtKB-SubCell"/>
</dbReference>
<dbReference type="GO" id="GO:0016829">
    <property type="term" value="F:lyase activity"/>
    <property type="evidence" value="ECO:0007669"/>
    <property type="project" value="UniProtKB-KW"/>
</dbReference>
<dbReference type="GO" id="GO:0046872">
    <property type="term" value="F:metal ion binding"/>
    <property type="evidence" value="ECO:0007669"/>
    <property type="project" value="UniProtKB-KW"/>
</dbReference>
<dbReference type="GO" id="GO:0008081">
    <property type="term" value="F:phosphoric diester hydrolase activity"/>
    <property type="evidence" value="ECO:0007669"/>
    <property type="project" value="InterPro"/>
</dbReference>
<dbReference type="GO" id="GO:0090729">
    <property type="term" value="F:toxin activity"/>
    <property type="evidence" value="ECO:0007669"/>
    <property type="project" value="UniProtKB-KW"/>
</dbReference>
<dbReference type="GO" id="GO:0031640">
    <property type="term" value="P:killing of cells of another organism"/>
    <property type="evidence" value="ECO:0007669"/>
    <property type="project" value="UniProtKB-KW"/>
</dbReference>
<dbReference type="GO" id="GO:0016042">
    <property type="term" value="P:lipid catabolic process"/>
    <property type="evidence" value="ECO:0007669"/>
    <property type="project" value="UniProtKB-KW"/>
</dbReference>
<dbReference type="CDD" id="cd08576">
    <property type="entry name" value="GDPD_like_SMaseD_PLD"/>
    <property type="match status" value="1"/>
</dbReference>
<dbReference type="Gene3D" id="3.20.20.190">
    <property type="entry name" value="Phosphatidylinositol (PI) phosphodiesterase"/>
    <property type="match status" value="1"/>
</dbReference>
<dbReference type="InterPro" id="IPR017946">
    <property type="entry name" value="PLC-like_Pdiesterase_TIM-brl"/>
</dbReference>
<dbReference type="Pfam" id="PF13653">
    <property type="entry name" value="GDPD_2"/>
    <property type="match status" value="1"/>
</dbReference>
<dbReference type="SUPFAM" id="SSF51695">
    <property type="entry name" value="PLC-like phosphodiesterases"/>
    <property type="match status" value="1"/>
</dbReference>